<gene>
    <name type="primary">ptcd3</name>
</gene>
<name>PTCD3_XENTR</name>
<protein>
    <recommendedName>
        <fullName evidence="4">Small ribosomal subunit protein mS39</fullName>
    </recommendedName>
    <alternativeName>
        <fullName>Pentatricopeptide repeat-containing protein 3, mitochondrial</fullName>
    </alternativeName>
</protein>
<dbReference type="EMBL" id="BC090356">
    <property type="protein sequence ID" value="AAH90356.1"/>
    <property type="molecule type" value="mRNA"/>
</dbReference>
<dbReference type="EMBL" id="BC123049">
    <property type="protein sequence ID" value="AAI23050.1"/>
    <property type="molecule type" value="mRNA"/>
</dbReference>
<dbReference type="RefSeq" id="NP_001072165.2">
    <property type="nucleotide sequence ID" value="NM_001078697.2"/>
</dbReference>
<dbReference type="SMR" id="Q0IHP3"/>
<dbReference type="FunCoup" id="Q0IHP3">
    <property type="interactions" value="3473"/>
</dbReference>
<dbReference type="STRING" id="8364.ENSXETP00000018591"/>
<dbReference type="PaxDb" id="8364-ENSXETP00000060726"/>
<dbReference type="DNASU" id="548397"/>
<dbReference type="GeneID" id="548397"/>
<dbReference type="KEGG" id="xtr:548397"/>
<dbReference type="AGR" id="Xenbase:XB-GENE-961480"/>
<dbReference type="CTD" id="55037"/>
<dbReference type="Xenbase" id="XB-GENE-961480">
    <property type="gene designation" value="ptcd3"/>
</dbReference>
<dbReference type="eggNOG" id="KOG4422">
    <property type="taxonomic scope" value="Eukaryota"/>
</dbReference>
<dbReference type="InParanoid" id="Q0IHP3"/>
<dbReference type="OrthoDB" id="185373at2759"/>
<dbReference type="Proteomes" id="UP000008143">
    <property type="component" value="Chromosome 1"/>
</dbReference>
<dbReference type="GO" id="GO:0005739">
    <property type="term" value="C:mitochondrion"/>
    <property type="evidence" value="ECO:0000250"/>
    <property type="project" value="UniProtKB"/>
</dbReference>
<dbReference type="GO" id="GO:1990904">
    <property type="term" value="C:ribonucleoprotein complex"/>
    <property type="evidence" value="ECO:0007669"/>
    <property type="project" value="UniProtKB-KW"/>
</dbReference>
<dbReference type="GO" id="GO:0005840">
    <property type="term" value="C:ribosome"/>
    <property type="evidence" value="ECO:0007669"/>
    <property type="project" value="UniProtKB-KW"/>
</dbReference>
<dbReference type="GO" id="GO:0043024">
    <property type="term" value="F:ribosomal small subunit binding"/>
    <property type="evidence" value="ECO:0000250"/>
    <property type="project" value="UniProtKB"/>
</dbReference>
<dbReference type="GO" id="GO:0019843">
    <property type="term" value="F:rRNA binding"/>
    <property type="evidence" value="ECO:0000250"/>
    <property type="project" value="UniProtKB"/>
</dbReference>
<dbReference type="GO" id="GO:0032543">
    <property type="term" value="P:mitochondrial translation"/>
    <property type="evidence" value="ECO:0000250"/>
    <property type="project" value="UniProtKB"/>
</dbReference>
<dbReference type="GO" id="GO:0006417">
    <property type="term" value="P:regulation of translation"/>
    <property type="evidence" value="ECO:0007669"/>
    <property type="project" value="UniProtKB-KW"/>
</dbReference>
<dbReference type="FunFam" id="1.25.40.10:FF:002139">
    <property type="entry name" value="Pentatricopeptide repeat domain 3"/>
    <property type="match status" value="1"/>
</dbReference>
<dbReference type="Gene3D" id="1.25.40.10">
    <property type="entry name" value="Tetratricopeptide repeat domain"/>
    <property type="match status" value="2"/>
</dbReference>
<dbReference type="InterPro" id="IPR002885">
    <property type="entry name" value="Pentatricopeptide_rpt"/>
</dbReference>
<dbReference type="InterPro" id="IPR037387">
    <property type="entry name" value="PTCD3"/>
</dbReference>
<dbReference type="InterPro" id="IPR055063">
    <property type="entry name" value="Rib_mS39_PPR"/>
</dbReference>
<dbReference type="InterPro" id="IPR011990">
    <property type="entry name" value="TPR-like_helical_dom_sf"/>
</dbReference>
<dbReference type="PANTHER" id="PTHR16276">
    <property type="entry name" value="PENTATRICOPEPTIDE REPEAT DOMAIN-CONTAINING PROTEIN 3"/>
    <property type="match status" value="1"/>
</dbReference>
<dbReference type="PANTHER" id="PTHR16276:SF1">
    <property type="entry name" value="SMALL RIBOSOMAL SUBUNIT PROTEIN MS39"/>
    <property type="match status" value="1"/>
</dbReference>
<dbReference type="Pfam" id="PF13812">
    <property type="entry name" value="PPR_3"/>
    <property type="match status" value="2"/>
</dbReference>
<dbReference type="Pfam" id="PF22330">
    <property type="entry name" value="Rib_mS39_PPR"/>
    <property type="match status" value="1"/>
</dbReference>
<dbReference type="PROSITE" id="PS51375">
    <property type="entry name" value="PPR"/>
    <property type="match status" value="4"/>
</dbReference>
<reference key="1">
    <citation type="submission" date="2006-09" db="EMBL/GenBank/DDBJ databases">
        <authorList>
            <consortium name="NIH - Xenopus Gene Collection (XGC) project"/>
        </authorList>
    </citation>
    <scope>NUCLEOTIDE SEQUENCE [LARGE SCALE MRNA]</scope>
    <source>
        <strain>N6</strain>
        <tissue>Oviduct</tissue>
    </source>
</reference>
<sequence length="670" mass="76051">MAAPCVRLGSVRCTGTLLRYFCGSARHRAAAASHEEIDIPRRKSWDKTAVLQALAYTVSHDPTAAHYMFQDEPFLAPKTSSEFRLYSLSKESGRNAAKYIIGTYPNLFQNDVAEPHIPCLMPENLQPQVEGVSEEALKERIQLRRVKESVDLFDQLLQGGTAPSLETTNKLLDLISFYGDREPVRDIQTSEQEQQEVQDQQETEDPKKRPRQYRKASEILGSWRENNNAERIFNLMPERNAHSFCTLIQGMAKFGSSSKAFNIYTDLMNNRLTADVQTFNALILAAPDIKEKYNEKWDLIVELLKHMVQQNVRPNLLTFNSVLKSLRKCGPMAKGLALQTINEMKALNIEPSLATYNHLLGVFYKGALSPRGQTEILSEVLDEIEGRSFTLRDPDDVYFFTNAMRVCLDLKDIELAYRLHTLQQTADNRGLMGDFYLQSTYYGRFFNLLCMMESIDIILKWYRELIPSLYYPNSRGMLDLLQALDMDNRLDLIPQIWKDIKQIGHSNKVELVEEVLNLMARDIQPPELQAAFGDTALDIKSLYEVKDRVRVALEWSAGSLGNVSALLARAGKTVEAWKMLQLFKKSHRVPSTEVLDEFLSRAKVDANTNLAISLVQLAVGFCLPNTAKLAQRVMEEFTVSEEQRLTLEDLQKSHSSSSSSSSSSSDSDRE</sequence>
<comment type="function">
    <text evidence="1">Mitochondrial protein that may have a role in mitochondrial translation.</text>
</comment>
<comment type="subcellular location">
    <subcellularLocation>
        <location evidence="1">Mitochondrion</location>
    </subcellularLocation>
</comment>
<comment type="similarity">
    <text evidence="4">Belongs to the mitochondrion-specific ribosomal protein mS39 family.</text>
</comment>
<evidence type="ECO:0000250" key="1"/>
<evidence type="ECO:0000255" key="2"/>
<evidence type="ECO:0000256" key="3">
    <source>
        <dbReference type="SAM" id="MobiDB-lite"/>
    </source>
</evidence>
<evidence type="ECO:0000305" key="4"/>
<organism>
    <name type="scientific">Xenopus tropicalis</name>
    <name type="common">Western clawed frog</name>
    <name type="synonym">Silurana tropicalis</name>
    <dbReference type="NCBI Taxonomy" id="8364"/>
    <lineage>
        <taxon>Eukaryota</taxon>
        <taxon>Metazoa</taxon>
        <taxon>Chordata</taxon>
        <taxon>Craniata</taxon>
        <taxon>Vertebrata</taxon>
        <taxon>Euteleostomi</taxon>
        <taxon>Amphibia</taxon>
        <taxon>Batrachia</taxon>
        <taxon>Anura</taxon>
        <taxon>Pipoidea</taxon>
        <taxon>Pipidae</taxon>
        <taxon>Xenopodinae</taxon>
        <taxon>Xenopus</taxon>
        <taxon>Silurana</taxon>
    </lineage>
</organism>
<proteinExistence type="evidence at transcript level"/>
<keyword id="KW-0496">Mitochondrion</keyword>
<keyword id="KW-1185">Reference proteome</keyword>
<keyword id="KW-0677">Repeat</keyword>
<keyword id="KW-0687">Ribonucleoprotein</keyword>
<keyword id="KW-0689">Ribosomal protein</keyword>
<keyword id="KW-0694">RNA-binding</keyword>
<keyword id="KW-0699">rRNA-binding</keyword>
<keyword id="KW-0809">Transit peptide</keyword>
<keyword id="KW-0810">Translation regulation</keyword>
<feature type="transit peptide" description="Mitochondrion" evidence="2">
    <location>
        <begin position="1"/>
        <end position="13"/>
    </location>
</feature>
<feature type="chain" id="PRO_0000305033" description="Small ribosomal subunit protein mS39">
    <location>
        <begin position="14"/>
        <end position="670"/>
    </location>
</feature>
<feature type="repeat" description="PPR 1">
    <location>
        <begin position="129"/>
        <end position="163"/>
    </location>
</feature>
<feature type="repeat" description="PPR 2">
    <location>
        <begin position="164"/>
        <end position="199"/>
    </location>
</feature>
<feature type="repeat" description="PPR 3">
    <location>
        <begin position="209"/>
        <end position="239"/>
    </location>
</feature>
<feature type="repeat" description="PPR 4">
    <location>
        <begin position="240"/>
        <end position="274"/>
    </location>
</feature>
<feature type="repeat" description="PPR 5">
    <location>
        <begin position="275"/>
        <end position="314"/>
    </location>
</feature>
<feature type="repeat" description="PPR 6">
    <location>
        <begin position="315"/>
        <end position="351"/>
    </location>
</feature>
<feature type="repeat" description="PPR 7">
    <location>
        <begin position="352"/>
        <end position="392"/>
    </location>
</feature>
<feature type="repeat" description="PPR 8">
    <location>
        <begin position="396"/>
        <end position="430"/>
    </location>
</feature>
<feature type="repeat" description="PPR 9">
    <location>
        <begin position="438"/>
        <end position="472"/>
    </location>
</feature>
<feature type="repeat" description="PPR 10">
    <location>
        <begin position="473"/>
        <end position="507"/>
    </location>
</feature>
<feature type="repeat" description="PPR 11">
    <location>
        <begin position="556"/>
        <end position="590"/>
    </location>
</feature>
<feature type="region of interest" description="Disordered" evidence="3">
    <location>
        <begin position="187"/>
        <end position="213"/>
    </location>
</feature>
<feature type="region of interest" description="Disordered" evidence="3">
    <location>
        <begin position="648"/>
        <end position="670"/>
    </location>
</feature>
<feature type="compositionally biased region" description="Acidic residues" evidence="3">
    <location>
        <begin position="193"/>
        <end position="203"/>
    </location>
</feature>
<feature type="compositionally biased region" description="Low complexity" evidence="3">
    <location>
        <begin position="653"/>
        <end position="670"/>
    </location>
</feature>
<feature type="sequence conflict" description="In Ref. 1; AAH90356." evidence="4" ref="1">
    <original>F</original>
    <variation>Y</variation>
    <location>
        <position position="254"/>
    </location>
</feature>
<feature type="sequence conflict" description="In Ref. 1; AAH90356." evidence="4" ref="1">
    <original>S</original>
    <variation>SES</variation>
    <location>
        <position position="664"/>
    </location>
</feature>
<accession>Q0IHP3</accession>
<accession>Q5EAN0</accession>